<proteinExistence type="inferred from homology"/>
<dbReference type="EMBL" id="CP000745">
    <property type="protein sequence ID" value="ABR66700.1"/>
    <property type="molecule type" value="Genomic_DNA"/>
</dbReference>
<dbReference type="STRING" id="426368.MmarC7_1642"/>
<dbReference type="KEGG" id="mmz:MmarC7_1642"/>
<dbReference type="eggNOG" id="arCOG02238">
    <property type="taxonomic scope" value="Archaea"/>
</dbReference>
<dbReference type="HOGENOM" id="CLU_094511_0_1_2"/>
<dbReference type="OrthoDB" id="74471at2157"/>
<dbReference type="HAMAP" id="MF_00674">
    <property type="entry name" value="UPF0251"/>
    <property type="match status" value="1"/>
</dbReference>
<dbReference type="InterPro" id="IPR002852">
    <property type="entry name" value="UPF0251"/>
</dbReference>
<dbReference type="PANTHER" id="PTHR37478">
    <property type="match status" value="1"/>
</dbReference>
<dbReference type="PANTHER" id="PTHR37478:SF2">
    <property type="entry name" value="UPF0251 PROTEIN TK0562"/>
    <property type="match status" value="1"/>
</dbReference>
<dbReference type="Pfam" id="PF02001">
    <property type="entry name" value="DUF134"/>
    <property type="match status" value="1"/>
</dbReference>
<comment type="similarity">
    <text evidence="1">Belongs to the UPF0251 family.</text>
</comment>
<accession>A6VJS4</accession>
<organism>
    <name type="scientific">Methanococcus maripaludis (strain C7 / ATCC BAA-1331)</name>
    <dbReference type="NCBI Taxonomy" id="426368"/>
    <lineage>
        <taxon>Archaea</taxon>
        <taxon>Methanobacteriati</taxon>
        <taxon>Methanobacteriota</taxon>
        <taxon>Methanomada group</taxon>
        <taxon>Methanococci</taxon>
        <taxon>Methanococcales</taxon>
        <taxon>Methanococcaceae</taxon>
        <taxon>Methanococcus</taxon>
    </lineage>
</organism>
<gene>
    <name type="ordered locus">MmarC7_1642</name>
</gene>
<reference key="1">
    <citation type="submission" date="2007-06" db="EMBL/GenBank/DDBJ databases">
        <title>Complete sequence of Methanococcus maripaludis C7.</title>
        <authorList>
            <consortium name="US DOE Joint Genome Institute"/>
            <person name="Copeland A."/>
            <person name="Lucas S."/>
            <person name="Lapidus A."/>
            <person name="Barry K."/>
            <person name="Glavina del Rio T."/>
            <person name="Dalin E."/>
            <person name="Tice H."/>
            <person name="Pitluck S."/>
            <person name="Clum A."/>
            <person name="Schmutz J."/>
            <person name="Larimer F."/>
            <person name="Land M."/>
            <person name="Hauser L."/>
            <person name="Kyrpides N."/>
            <person name="Anderson I."/>
            <person name="Sieprawska-Lupa M."/>
            <person name="Whitman W.B."/>
            <person name="Richardson P."/>
        </authorList>
    </citation>
    <scope>NUCLEOTIDE SEQUENCE [LARGE SCALE GENOMIC DNA]</scope>
    <source>
        <strain>C7 / ATCC BAA-1331</strain>
    </source>
</reference>
<evidence type="ECO:0000255" key="1">
    <source>
        <dbReference type="HAMAP-Rule" id="MF_00674"/>
    </source>
</evidence>
<protein>
    <recommendedName>
        <fullName evidence="1">UPF0251 protein MmarC7_1642</fullName>
    </recommendedName>
</protein>
<name>Y1642_METM7</name>
<sequence length="130" mass="14946">MKFRKGRPKIPRLISEEPQFKLFKPAGTPGTELESEVLTFEELESLRLVDYLNQPHEEAADAMGISRRVFWNILKSARKKVADALINGKMIDIGGGYYKIRECNYEDECQRGRNCRYGVSNCLTLKKDSE</sequence>
<feature type="chain" id="PRO_1000044750" description="UPF0251 protein MmarC7_1642">
    <location>
        <begin position="1"/>
        <end position="130"/>
    </location>
</feature>